<name>YBEY_BORDL</name>
<reference key="1">
    <citation type="journal article" date="2008" name="PLoS Genet.">
        <title>The genome of Borrelia recurrentis, the agent of deadly louse-borne relapsing fever, is a degraded subset of tick-borne Borrelia duttonii.</title>
        <authorList>
            <person name="Lescot M."/>
            <person name="Audic S."/>
            <person name="Robert C."/>
            <person name="Nguyen T.T."/>
            <person name="Blanc G."/>
            <person name="Cutler S.J."/>
            <person name="Wincker P."/>
            <person name="Couloux A."/>
            <person name="Claverie J.-M."/>
            <person name="Raoult D."/>
            <person name="Drancourt M."/>
        </authorList>
    </citation>
    <scope>NUCLEOTIDE SEQUENCE [LARGE SCALE GENOMIC DNA]</scope>
    <source>
        <strain>Ly</strain>
    </source>
</reference>
<proteinExistence type="inferred from homology"/>
<keyword id="KW-0963">Cytoplasm</keyword>
<keyword id="KW-0255">Endonuclease</keyword>
<keyword id="KW-0378">Hydrolase</keyword>
<keyword id="KW-0479">Metal-binding</keyword>
<keyword id="KW-0540">Nuclease</keyword>
<keyword id="KW-0690">Ribosome biogenesis</keyword>
<keyword id="KW-0698">rRNA processing</keyword>
<keyword id="KW-0862">Zinc</keyword>
<accession>B5RKV9</accession>
<evidence type="ECO:0000255" key="1">
    <source>
        <dbReference type="HAMAP-Rule" id="MF_00009"/>
    </source>
</evidence>
<feature type="chain" id="PRO_1000089153" description="Endoribonuclease YbeY">
    <location>
        <begin position="1"/>
        <end position="148"/>
    </location>
</feature>
<feature type="binding site" evidence="1">
    <location>
        <position position="113"/>
    </location>
    <ligand>
        <name>Zn(2+)</name>
        <dbReference type="ChEBI" id="CHEBI:29105"/>
        <note>catalytic</note>
    </ligand>
</feature>
<feature type="binding site" evidence="1">
    <location>
        <position position="117"/>
    </location>
    <ligand>
        <name>Zn(2+)</name>
        <dbReference type="ChEBI" id="CHEBI:29105"/>
        <note>catalytic</note>
    </ligand>
</feature>
<feature type="binding site" evidence="1">
    <location>
        <position position="123"/>
    </location>
    <ligand>
        <name>Zn(2+)</name>
        <dbReference type="ChEBI" id="CHEBI:29105"/>
        <note>catalytic</note>
    </ligand>
</feature>
<protein>
    <recommendedName>
        <fullName evidence="1">Endoribonuclease YbeY</fullName>
        <ecNumber evidence="1">3.1.-.-</ecNumber>
    </recommendedName>
</protein>
<gene>
    <name evidence="1" type="primary">ybeY</name>
    <name type="ordered locus">BDU_64</name>
</gene>
<sequence length="148" mass="17821">MIKEELNLWAEGVEFRHWDAYYNFILSVLNFLCIKEYELSVILCNNEYIQKLNGEFRQKPEPTDVLSFNYFEGSEQINHKIQGDIIISLEYLEFSSLEFNVEMYEELQRNTIHGILHLIGYTHDTNDFQNETMLIIQERVLRETRRVF</sequence>
<comment type="function">
    <text evidence="1">Single strand-specific metallo-endoribonuclease involved in late-stage 70S ribosome quality control and in maturation of the 3' terminus of the 16S rRNA.</text>
</comment>
<comment type="cofactor">
    <cofactor evidence="1">
        <name>Zn(2+)</name>
        <dbReference type="ChEBI" id="CHEBI:29105"/>
    </cofactor>
    <text evidence="1">Binds 1 zinc ion.</text>
</comment>
<comment type="subcellular location">
    <subcellularLocation>
        <location evidence="1">Cytoplasm</location>
    </subcellularLocation>
</comment>
<comment type="similarity">
    <text evidence="1">Belongs to the endoribonuclease YbeY family.</text>
</comment>
<dbReference type="EC" id="3.1.-.-" evidence="1"/>
<dbReference type="EMBL" id="CP000976">
    <property type="protein sequence ID" value="ACH93020.1"/>
    <property type="molecule type" value="Genomic_DNA"/>
</dbReference>
<dbReference type="RefSeq" id="WP_012537832.1">
    <property type="nucleotide sequence ID" value="NC_011229.1"/>
</dbReference>
<dbReference type="SMR" id="B5RKV9"/>
<dbReference type="STRING" id="412419.BDU_64"/>
<dbReference type="KEGG" id="bdu:BDU_64"/>
<dbReference type="eggNOG" id="COG0319">
    <property type="taxonomic scope" value="Bacteria"/>
</dbReference>
<dbReference type="HOGENOM" id="CLU_106710_3_3_12"/>
<dbReference type="OrthoDB" id="9807740at2"/>
<dbReference type="Proteomes" id="UP000000611">
    <property type="component" value="Chromosome"/>
</dbReference>
<dbReference type="GO" id="GO:0005737">
    <property type="term" value="C:cytoplasm"/>
    <property type="evidence" value="ECO:0007669"/>
    <property type="project" value="UniProtKB-SubCell"/>
</dbReference>
<dbReference type="GO" id="GO:0004222">
    <property type="term" value="F:metalloendopeptidase activity"/>
    <property type="evidence" value="ECO:0007669"/>
    <property type="project" value="InterPro"/>
</dbReference>
<dbReference type="GO" id="GO:0004521">
    <property type="term" value="F:RNA endonuclease activity"/>
    <property type="evidence" value="ECO:0007669"/>
    <property type="project" value="UniProtKB-UniRule"/>
</dbReference>
<dbReference type="GO" id="GO:0008270">
    <property type="term" value="F:zinc ion binding"/>
    <property type="evidence" value="ECO:0007669"/>
    <property type="project" value="UniProtKB-UniRule"/>
</dbReference>
<dbReference type="GO" id="GO:0006364">
    <property type="term" value="P:rRNA processing"/>
    <property type="evidence" value="ECO:0007669"/>
    <property type="project" value="UniProtKB-UniRule"/>
</dbReference>
<dbReference type="Gene3D" id="3.40.390.30">
    <property type="entry name" value="Metalloproteases ('zincins'), catalytic domain"/>
    <property type="match status" value="1"/>
</dbReference>
<dbReference type="HAMAP" id="MF_00009">
    <property type="entry name" value="Endoribonucl_YbeY"/>
    <property type="match status" value="1"/>
</dbReference>
<dbReference type="InterPro" id="IPR023091">
    <property type="entry name" value="MetalPrtase_cat_dom_sf_prd"/>
</dbReference>
<dbReference type="InterPro" id="IPR002036">
    <property type="entry name" value="YbeY"/>
</dbReference>
<dbReference type="InterPro" id="IPR020549">
    <property type="entry name" value="YbeY_CS"/>
</dbReference>
<dbReference type="NCBIfam" id="TIGR00043">
    <property type="entry name" value="rRNA maturation RNase YbeY"/>
    <property type="match status" value="1"/>
</dbReference>
<dbReference type="PANTHER" id="PTHR46986">
    <property type="entry name" value="ENDORIBONUCLEASE YBEY, CHLOROPLASTIC"/>
    <property type="match status" value="1"/>
</dbReference>
<dbReference type="PANTHER" id="PTHR46986:SF1">
    <property type="entry name" value="ENDORIBONUCLEASE YBEY, CHLOROPLASTIC"/>
    <property type="match status" value="1"/>
</dbReference>
<dbReference type="Pfam" id="PF02130">
    <property type="entry name" value="YbeY"/>
    <property type="match status" value="1"/>
</dbReference>
<dbReference type="SUPFAM" id="SSF55486">
    <property type="entry name" value="Metalloproteases ('zincins'), catalytic domain"/>
    <property type="match status" value="1"/>
</dbReference>
<dbReference type="PROSITE" id="PS01306">
    <property type="entry name" value="UPF0054"/>
    <property type="match status" value="1"/>
</dbReference>
<organism>
    <name type="scientific">Borrelia duttonii (strain Ly)</name>
    <dbReference type="NCBI Taxonomy" id="412419"/>
    <lineage>
        <taxon>Bacteria</taxon>
        <taxon>Pseudomonadati</taxon>
        <taxon>Spirochaetota</taxon>
        <taxon>Spirochaetia</taxon>
        <taxon>Spirochaetales</taxon>
        <taxon>Borreliaceae</taxon>
        <taxon>Borrelia</taxon>
    </lineage>
</organism>